<sequence length="173" mass="19395">MALRPARCYRTTERRSYTRKEYVRAVPQPKVVHYVMGNSSVEFPVEVQLVSKSDILIRHNALESSRIAGNKYIMGECGRTGYLFNIRVYPHEILRENKMAAGAGADRISDGMRLSFGKAVGTAAKVKKGQEIITIGVNPERFYAAKEALRRCSMKLPTACKIVVTKGKELIKD</sequence>
<evidence type="ECO:0000255" key="1">
    <source>
        <dbReference type="HAMAP-Rule" id="MF_00448"/>
    </source>
</evidence>
<evidence type="ECO:0000305" key="2"/>
<dbReference type="EMBL" id="CP000609">
    <property type="protein sequence ID" value="ABO34620.1"/>
    <property type="molecule type" value="Genomic_DNA"/>
</dbReference>
<dbReference type="RefSeq" id="WP_011868075.1">
    <property type="nucleotide sequence ID" value="NC_009135.1"/>
</dbReference>
<dbReference type="SMR" id="A4FWP5"/>
<dbReference type="STRING" id="402880.MmarC5_0304"/>
<dbReference type="GeneID" id="4929315"/>
<dbReference type="KEGG" id="mmq:MmarC5_0304"/>
<dbReference type="eggNOG" id="arCOG04113">
    <property type="taxonomic scope" value="Archaea"/>
</dbReference>
<dbReference type="HOGENOM" id="CLU_084051_0_2_2"/>
<dbReference type="OrthoDB" id="30538at2157"/>
<dbReference type="Proteomes" id="UP000000253">
    <property type="component" value="Chromosome"/>
</dbReference>
<dbReference type="GO" id="GO:1990904">
    <property type="term" value="C:ribonucleoprotein complex"/>
    <property type="evidence" value="ECO:0007669"/>
    <property type="project" value="UniProtKB-KW"/>
</dbReference>
<dbReference type="GO" id="GO:0005840">
    <property type="term" value="C:ribosome"/>
    <property type="evidence" value="ECO:0007669"/>
    <property type="project" value="UniProtKB-KW"/>
</dbReference>
<dbReference type="GO" id="GO:0003735">
    <property type="term" value="F:structural constituent of ribosome"/>
    <property type="evidence" value="ECO:0007669"/>
    <property type="project" value="InterPro"/>
</dbReference>
<dbReference type="GO" id="GO:0006412">
    <property type="term" value="P:translation"/>
    <property type="evidence" value="ECO:0007669"/>
    <property type="project" value="UniProtKB-UniRule"/>
</dbReference>
<dbReference type="CDD" id="cd01433">
    <property type="entry name" value="Ribosomal_L16_L10e"/>
    <property type="match status" value="1"/>
</dbReference>
<dbReference type="Gene3D" id="3.90.1170.10">
    <property type="entry name" value="Ribosomal protein L10e/L16"/>
    <property type="match status" value="1"/>
</dbReference>
<dbReference type="HAMAP" id="MF_00448">
    <property type="entry name" value="Ribosomal_uL16_arch"/>
    <property type="match status" value="1"/>
</dbReference>
<dbReference type="InterPro" id="IPR047873">
    <property type="entry name" value="Ribosomal_uL16"/>
</dbReference>
<dbReference type="InterPro" id="IPR022981">
    <property type="entry name" value="Ribosomal_uL16_arc"/>
</dbReference>
<dbReference type="InterPro" id="IPR018255">
    <property type="entry name" value="Ribosomal_uL16_CS_euk_arc"/>
</dbReference>
<dbReference type="InterPro" id="IPR016180">
    <property type="entry name" value="Ribosomal_uL16_dom"/>
</dbReference>
<dbReference type="InterPro" id="IPR001197">
    <property type="entry name" value="Ribosomal_uL16_euk_arch"/>
</dbReference>
<dbReference type="InterPro" id="IPR036920">
    <property type="entry name" value="Ribosomal_uL16_sf"/>
</dbReference>
<dbReference type="NCBIfam" id="NF003239">
    <property type="entry name" value="PRK04199.1-4"/>
    <property type="match status" value="1"/>
</dbReference>
<dbReference type="NCBIfam" id="TIGR00279">
    <property type="entry name" value="uL16_euk_arch"/>
    <property type="match status" value="1"/>
</dbReference>
<dbReference type="PANTHER" id="PTHR11726">
    <property type="entry name" value="60S RIBOSOMAL PROTEIN L10"/>
    <property type="match status" value="1"/>
</dbReference>
<dbReference type="Pfam" id="PF00252">
    <property type="entry name" value="Ribosomal_L16"/>
    <property type="match status" value="1"/>
</dbReference>
<dbReference type="PIRSF" id="PIRSF005590">
    <property type="entry name" value="Ribosomal_L10"/>
    <property type="match status" value="1"/>
</dbReference>
<dbReference type="SUPFAM" id="SSF54686">
    <property type="entry name" value="Ribosomal protein L16p/L10e"/>
    <property type="match status" value="1"/>
</dbReference>
<dbReference type="PROSITE" id="PS01257">
    <property type="entry name" value="RIBOSOMAL_L10E"/>
    <property type="match status" value="1"/>
</dbReference>
<protein>
    <recommendedName>
        <fullName evidence="1">Large ribosomal subunit protein uL16</fullName>
    </recommendedName>
    <alternativeName>
        <fullName evidence="2">50S ribosomal protein L10e</fullName>
    </alternativeName>
</protein>
<name>RL10E_METM5</name>
<reference key="1">
    <citation type="submission" date="2007-03" db="EMBL/GenBank/DDBJ databases">
        <title>Complete sequence of chromosome of Methanococcus maripaludis C5.</title>
        <authorList>
            <consortium name="US DOE Joint Genome Institute"/>
            <person name="Copeland A."/>
            <person name="Lucas S."/>
            <person name="Lapidus A."/>
            <person name="Barry K."/>
            <person name="Glavina del Rio T."/>
            <person name="Dalin E."/>
            <person name="Tice H."/>
            <person name="Pitluck S."/>
            <person name="Chertkov O."/>
            <person name="Brettin T."/>
            <person name="Bruce D."/>
            <person name="Han C."/>
            <person name="Detter J.C."/>
            <person name="Schmutz J."/>
            <person name="Larimer F."/>
            <person name="Land M."/>
            <person name="Hauser L."/>
            <person name="Kyrpides N."/>
            <person name="Mikhailova N."/>
            <person name="Sieprawska-Lupa M."/>
            <person name="Whitman W.B."/>
            <person name="Richardson P."/>
        </authorList>
    </citation>
    <scope>NUCLEOTIDE SEQUENCE [LARGE SCALE GENOMIC DNA]</scope>
    <source>
        <strain>C5 / ATCC BAA-1333</strain>
    </source>
</reference>
<keyword id="KW-0687">Ribonucleoprotein</keyword>
<keyword id="KW-0689">Ribosomal protein</keyword>
<proteinExistence type="inferred from homology"/>
<accession>A4FWP5</accession>
<organism>
    <name type="scientific">Methanococcus maripaludis (strain C5 / ATCC BAA-1333)</name>
    <dbReference type="NCBI Taxonomy" id="402880"/>
    <lineage>
        <taxon>Archaea</taxon>
        <taxon>Methanobacteriati</taxon>
        <taxon>Methanobacteriota</taxon>
        <taxon>Methanomada group</taxon>
        <taxon>Methanococci</taxon>
        <taxon>Methanococcales</taxon>
        <taxon>Methanococcaceae</taxon>
        <taxon>Methanococcus</taxon>
    </lineage>
</organism>
<gene>
    <name evidence="1" type="primary">rpl10e</name>
    <name type="ordered locus">MmarC5_0304</name>
</gene>
<feature type="chain" id="PRO_1000026189" description="Large ribosomal subunit protein uL16">
    <location>
        <begin position="1"/>
        <end position="173"/>
    </location>
</feature>
<comment type="similarity">
    <text evidence="1">Belongs to the universal ribosomal protein uL16 family.</text>
</comment>